<keyword id="KW-0460">Magnesium</keyword>
<keyword id="KW-0464">Manganese</keyword>
<keyword id="KW-0479">Metal-binding</keyword>
<keyword id="KW-0521">NADP</keyword>
<keyword id="KW-0560">Oxidoreductase</keyword>
<keyword id="KW-0576">Peroxisome</keyword>
<keyword id="KW-1185">Reference proteome</keyword>
<keyword id="KW-0346">Stress response</keyword>
<keyword id="KW-0816">Tricarboxylic acid cycle</keyword>
<organism>
    <name type="scientific">Arabidopsis thaliana</name>
    <name type="common">Mouse-ear cress</name>
    <dbReference type="NCBI Taxonomy" id="3702"/>
    <lineage>
        <taxon>Eukaryota</taxon>
        <taxon>Viridiplantae</taxon>
        <taxon>Streptophyta</taxon>
        <taxon>Embryophyta</taxon>
        <taxon>Tracheophyta</taxon>
        <taxon>Spermatophyta</taxon>
        <taxon>Magnoliopsida</taxon>
        <taxon>eudicotyledons</taxon>
        <taxon>Gunneridae</taxon>
        <taxon>Pentapetalae</taxon>
        <taxon>rosids</taxon>
        <taxon>malvids</taxon>
        <taxon>Brassicales</taxon>
        <taxon>Brassicaceae</taxon>
        <taxon>Camelineae</taxon>
        <taxon>Arabidopsis</taxon>
    </lineage>
</organism>
<accession>Q9SLK0</accession>
<reference key="1">
    <citation type="submission" date="2000-10" db="EMBL/GenBank/DDBJ databases">
        <title>Isolation of cDNA encoding NADP-specific isocitrate dehydrogenase from Arabidopsis thaliana.</title>
        <authorList>
            <person name="Kihara T."/>
            <person name="Ito N."/>
            <person name="Koyama H."/>
            <person name="Hara T."/>
        </authorList>
    </citation>
    <scope>NUCLEOTIDE SEQUENCE [MRNA]</scope>
    <source>
        <strain>cv. Columbia</strain>
    </source>
</reference>
<reference key="2">
    <citation type="journal article" date="2000" name="Nature">
        <title>Sequence and analysis of chromosome 1 of the plant Arabidopsis thaliana.</title>
        <authorList>
            <person name="Theologis A."/>
            <person name="Ecker J.R."/>
            <person name="Palm C.J."/>
            <person name="Federspiel N.A."/>
            <person name="Kaul S."/>
            <person name="White O."/>
            <person name="Alonso J."/>
            <person name="Altafi H."/>
            <person name="Araujo R."/>
            <person name="Bowman C.L."/>
            <person name="Brooks S.Y."/>
            <person name="Buehler E."/>
            <person name="Chan A."/>
            <person name="Chao Q."/>
            <person name="Chen H."/>
            <person name="Cheuk R.F."/>
            <person name="Chin C.W."/>
            <person name="Chung M.K."/>
            <person name="Conn L."/>
            <person name="Conway A.B."/>
            <person name="Conway A.R."/>
            <person name="Creasy T.H."/>
            <person name="Dewar K."/>
            <person name="Dunn P."/>
            <person name="Etgu P."/>
            <person name="Feldblyum T.V."/>
            <person name="Feng J.-D."/>
            <person name="Fong B."/>
            <person name="Fujii C.Y."/>
            <person name="Gill J.E."/>
            <person name="Goldsmith A.D."/>
            <person name="Haas B."/>
            <person name="Hansen N.F."/>
            <person name="Hughes B."/>
            <person name="Huizar L."/>
            <person name="Hunter J.L."/>
            <person name="Jenkins J."/>
            <person name="Johnson-Hopson C."/>
            <person name="Khan S."/>
            <person name="Khaykin E."/>
            <person name="Kim C.J."/>
            <person name="Koo H.L."/>
            <person name="Kremenetskaia I."/>
            <person name="Kurtz D.B."/>
            <person name="Kwan A."/>
            <person name="Lam B."/>
            <person name="Langin-Hooper S."/>
            <person name="Lee A."/>
            <person name="Lee J.M."/>
            <person name="Lenz C.A."/>
            <person name="Li J.H."/>
            <person name="Li Y.-P."/>
            <person name="Lin X."/>
            <person name="Liu S.X."/>
            <person name="Liu Z.A."/>
            <person name="Luros J.S."/>
            <person name="Maiti R."/>
            <person name="Marziali A."/>
            <person name="Militscher J."/>
            <person name="Miranda M."/>
            <person name="Nguyen M."/>
            <person name="Nierman W.C."/>
            <person name="Osborne B.I."/>
            <person name="Pai G."/>
            <person name="Peterson J."/>
            <person name="Pham P.K."/>
            <person name="Rizzo M."/>
            <person name="Rooney T."/>
            <person name="Rowley D."/>
            <person name="Sakano H."/>
            <person name="Salzberg S.L."/>
            <person name="Schwartz J.R."/>
            <person name="Shinn P."/>
            <person name="Southwick A.M."/>
            <person name="Sun H."/>
            <person name="Tallon L.J."/>
            <person name="Tambunga G."/>
            <person name="Toriumi M.J."/>
            <person name="Town C.D."/>
            <person name="Utterback T."/>
            <person name="Van Aken S."/>
            <person name="Vaysberg M."/>
            <person name="Vysotskaia V.S."/>
            <person name="Walker M."/>
            <person name="Wu D."/>
            <person name="Yu G."/>
            <person name="Fraser C.M."/>
            <person name="Venter J.C."/>
            <person name="Davis R.W."/>
        </authorList>
    </citation>
    <scope>NUCLEOTIDE SEQUENCE [LARGE SCALE GENOMIC DNA]</scope>
    <source>
        <strain>cv. Columbia</strain>
    </source>
</reference>
<reference key="3">
    <citation type="journal article" date="2017" name="Plant J.">
        <title>Araport11: a complete reannotation of the Arabidopsis thaliana reference genome.</title>
        <authorList>
            <person name="Cheng C.Y."/>
            <person name="Krishnakumar V."/>
            <person name="Chan A.P."/>
            <person name="Thibaud-Nissen F."/>
            <person name="Schobel S."/>
            <person name="Town C.D."/>
        </authorList>
    </citation>
    <scope>GENOME REANNOTATION</scope>
    <source>
        <strain>cv. Columbia</strain>
    </source>
</reference>
<reference key="4">
    <citation type="submission" date="2006-06" db="EMBL/GenBank/DDBJ databases">
        <title>Arabidopsis ORF clones.</title>
        <authorList>
            <person name="Shinn P."/>
            <person name="Chen H."/>
            <person name="Kim C.J."/>
            <person name="Quinitio C."/>
            <person name="Ecker J.R."/>
        </authorList>
    </citation>
    <scope>NUCLEOTIDE SEQUENCE [LARGE SCALE MRNA]</scope>
    <source>
        <strain>cv. Columbia</strain>
    </source>
</reference>
<reference key="5">
    <citation type="journal article" date="2007" name="Plant Cell">
        <title>Proteome analysis of Arabidopsis leaf peroxisomes reveals novel targeting peptides, metabolic pathways, and defense mechanisms.</title>
        <authorList>
            <person name="Reumann S."/>
            <person name="Babujee L."/>
            <person name="Ma C."/>
            <person name="Wienkoop S."/>
            <person name="Siemsen T."/>
            <person name="Antonicelli G.E."/>
            <person name="Rasche N."/>
            <person name="Lueder F."/>
            <person name="Weckwerth W."/>
            <person name="Jahn O."/>
        </authorList>
    </citation>
    <scope>SUBCELLULAR LOCATION</scope>
    <scope>IDENTIFICATION BY MASS SPECTROMETRY</scope>
</reference>
<proteinExistence type="evidence at protein level"/>
<name>ICDHX_ARATH</name>
<protein>
    <recommendedName>
        <fullName>Peroxisomal isocitrate dehydrogenase [NADP]</fullName>
        <ecNumber>1.1.1.42</ecNumber>
    </recommendedName>
</protein>
<feature type="chain" id="PRO_0000421962" description="Peroxisomal isocitrate dehydrogenase [NADP]">
    <location>
        <begin position="1"/>
        <end position="416"/>
    </location>
</feature>
<feature type="short sequence motif" description="Peroxisomal targeting signal" evidence="3">
    <location>
        <begin position="414"/>
        <end position="416"/>
    </location>
</feature>
<feature type="binding site" evidence="1">
    <location>
        <begin position="77"/>
        <end position="79"/>
    </location>
    <ligand>
        <name>NADP(+)</name>
        <dbReference type="ChEBI" id="CHEBI:58349"/>
    </ligand>
</feature>
<feature type="binding site" evidence="1">
    <location>
        <position position="79"/>
    </location>
    <ligand>
        <name>substrate</name>
    </ligand>
</feature>
<feature type="binding site" evidence="1">
    <location>
        <position position="84"/>
    </location>
    <ligand>
        <name>NADP(+)</name>
        <dbReference type="ChEBI" id="CHEBI:58349"/>
    </ligand>
</feature>
<feature type="binding site" evidence="1">
    <location>
        <begin position="96"/>
        <end position="102"/>
    </location>
    <ligand>
        <name>substrate</name>
    </ligand>
</feature>
<feature type="binding site" evidence="1">
    <location>
        <position position="111"/>
    </location>
    <ligand>
        <name>substrate</name>
    </ligand>
</feature>
<feature type="binding site" evidence="1">
    <location>
        <position position="134"/>
    </location>
    <ligand>
        <name>substrate</name>
    </ligand>
</feature>
<feature type="binding site" evidence="1">
    <location>
        <position position="253"/>
    </location>
    <ligand>
        <name>Mn(2+)</name>
        <dbReference type="ChEBI" id="CHEBI:29035"/>
    </ligand>
</feature>
<feature type="binding site" evidence="1">
    <location>
        <position position="261"/>
    </location>
    <ligand>
        <name>NADP(+)</name>
        <dbReference type="ChEBI" id="CHEBI:58349"/>
    </ligand>
</feature>
<feature type="binding site" evidence="1">
    <location>
        <position position="276"/>
    </location>
    <ligand>
        <name>Mn(2+)</name>
        <dbReference type="ChEBI" id="CHEBI:29035"/>
    </ligand>
</feature>
<feature type="binding site" evidence="1">
    <location>
        <begin position="311"/>
        <end position="316"/>
    </location>
    <ligand>
        <name>NADP(+)</name>
        <dbReference type="ChEBI" id="CHEBI:58349"/>
    </ligand>
</feature>
<feature type="binding site" evidence="1">
    <location>
        <position position="329"/>
    </location>
    <ligand>
        <name>NADP(+)</name>
        <dbReference type="ChEBI" id="CHEBI:58349"/>
    </ligand>
</feature>
<feature type="site" description="Critical for catalysis" evidence="1">
    <location>
        <position position="141"/>
    </location>
</feature>
<feature type="site" description="Critical for catalysis" evidence="1">
    <location>
        <position position="213"/>
    </location>
</feature>
<gene>
    <name type="primary">ICDH</name>
    <name type="ordered locus">At1g54340</name>
    <name type="ORF">F20D21.16</name>
</gene>
<sequence length="416" mass="47234">MEFEKIKVINPVVEMDGDEMTRVIWKFIKDKLIFPFLELDIKYFDLGLPNRDFTDDKVTIETAEATLKYNVAIKCATITPDEARVREFGLKKMWRSPNGTIRNILNGTVFREPIICRNIPRLVPGWTKPICIGRHAFGDQYRATDLIVNEPGKLKLVFEPSGSSQKTEFEVFNFTGGGVALAMYNTDESIRAFAESSMYTAYQKKWPLYLSTKNTILKIYDGRFKDIFQEVYEANWRSKYEAAGIWYEHRLIDDMVAYAMKSEGGYVWACKNYDGDVQSDFLAQGYGSLGMMTSVLVCPDGKTIEAEAAHGTVTRHYRVHQKGGETSTNSIASIFAWSRGLAHRAKLDSNAALLSYTEKLEAACMGTVESGKMTKDLALLIHGAKVRRDQYVNTEEFIDAVAWELKRRLLGNNSRL</sequence>
<evidence type="ECO:0000250" key="1"/>
<evidence type="ECO:0000269" key="2">
    <source>
    </source>
</evidence>
<evidence type="ECO:0000305" key="3"/>
<comment type="function">
    <text evidence="1">May be involved in response to oxidative stresses.</text>
</comment>
<comment type="catalytic activity">
    <reaction>
        <text>D-threo-isocitrate + NADP(+) = 2-oxoglutarate + CO2 + NADPH</text>
        <dbReference type="Rhea" id="RHEA:19629"/>
        <dbReference type="ChEBI" id="CHEBI:15562"/>
        <dbReference type="ChEBI" id="CHEBI:16526"/>
        <dbReference type="ChEBI" id="CHEBI:16810"/>
        <dbReference type="ChEBI" id="CHEBI:57783"/>
        <dbReference type="ChEBI" id="CHEBI:58349"/>
        <dbReference type="EC" id="1.1.1.42"/>
    </reaction>
</comment>
<comment type="cofactor">
    <cofactor evidence="1">
        <name>Mg(2+)</name>
        <dbReference type="ChEBI" id="CHEBI:18420"/>
    </cofactor>
    <cofactor evidence="1">
        <name>Mn(2+)</name>
        <dbReference type="ChEBI" id="CHEBI:29035"/>
    </cofactor>
    <text evidence="1">Binds 1 Mg(2+) or Mn(2+) ion per subunit.</text>
</comment>
<comment type="subcellular location">
    <subcellularLocation>
        <location evidence="2">Peroxisome</location>
    </subcellularLocation>
</comment>
<comment type="similarity">
    <text evidence="3">Belongs to the isocitrate and isopropylmalate dehydrogenases family.</text>
</comment>
<dbReference type="EC" id="1.1.1.42"/>
<dbReference type="EMBL" id="AF316501">
    <property type="protein sequence ID" value="AAK06592.1"/>
    <property type="molecule type" value="mRNA"/>
</dbReference>
<dbReference type="EMBL" id="AC005287">
    <property type="protein sequence ID" value="AAD25614.1"/>
    <property type="molecule type" value="Genomic_DNA"/>
</dbReference>
<dbReference type="EMBL" id="CP002684">
    <property type="protein sequence ID" value="AEE33082.1"/>
    <property type="molecule type" value="Genomic_DNA"/>
</dbReference>
<dbReference type="EMBL" id="BT025983">
    <property type="protein sequence ID" value="ABG25072.1"/>
    <property type="molecule type" value="mRNA"/>
</dbReference>
<dbReference type="PIR" id="A96585">
    <property type="entry name" value="A96585"/>
</dbReference>
<dbReference type="RefSeq" id="NP_175836.1">
    <property type="nucleotide sequence ID" value="NM_104312.3"/>
</dbReference>
<dbReference type="SMR" id="Q9SLK0"/>
<dbReference type="BioGRID" id="27100">
    <property type="interactions" value="3"/>
</dbReference>
<dbReference type="FunCoup" id="Q9SLK0">
    <property type="interactions" value="3339"/>
</dbReference>
<dbReference type="STRING" id="3702.Q9SLK0"/>
<dbReference type="iPTMnet" id="Q9SLK0"/>
<dbReference type="PaxDb" id="3702-AT1G54340.1"/>
<dbReference type="ProteomicsDB" id="228758"/>
<dbReference type="EnsemblPlants" id="AT1G54340.1">
    <property type="protein sequence ID" value="AT1G54340.1"/>
    <property type="gene ID" value="AT1G54340"/>
</dbReference>
<dbReference type="GeneID" id="841875"/>
<dbReference type="Gramene" id="AT1G54340.1">
    <property type="protein sequence ID" value="AT1G54340.1"/>
    <property type="gene ID" value="AT1G54340"/>
</dbReference>
<dbReference type="KEGG" id="ath:AT1G54340"/>
<dbReference type="Araport" id="AT1G54340"/>
<dbReference type="TAIR" id="AT1G54340">
    <property type="gene designation" value="ICDH"/>
</dbReference>
<dbReference type="eggNOG" id="KOG1526">
    <property type="taxonomic scope" value="Eukaryota"/>
</dbReference>
<dbReference type="HOGENOM" id="CLU_023296_1_1_1"/>
<dbReference type="InParanoid" id="Q9SLK0"/>
<dbReference type="OMA" id="ENYETKW"/>
<dbReference type="PhylomeDB" id="Q9SLK0"/>
<dbReference type="BioCyc" id="ARA:AT1G54340-MONOMER"/>
<dbReference type="BRENDA" id="1.1.1.42">
    <property type="organism ID" value="399"/>
</dbReference>
<dbReference type="PRO" id="PR:Q9SLK0"/>
<dbReference type="Proteomes" id="UP000006548">
    <property type="component" value="Chromosome 1"/>
</dbReference>
<dbReference type="ExpressionAtlas" id="Q9SLK0">
    <property type="expression patterns" value="baseline and differential"/>
</dbReference>
<dbReference type="GO" id="GO:0005634">
    <property type="term" value="C:nucleus"/>
    <property type="evidence" value="ECO:0007005"/>
    <property type="project" value="TAIR"/>
</dbReference>
<dbReference type="GO" id="GO:0005777">
    <property type="term" value="C:peroxisome"/>
    <property type="evidence" value="ECO:0007005"/>
    <property type="project" value="TAIR"/>
</dbReference>
<dbReference type="GO" id="GO:0004450">
    <property type="term" value="F:isocitrate dehydrogenase (NADP+) activity"/>
    <property type="evidence" value="ECO:0007669"/>
    <property type="project" value="UniProtKB-EC"/>
</dbReference>
<dbReference type="GO" id="GO:0000287">
    <property type="term" value="F:magnesium ion binding"/>
    <property type="evidence" value="ECO:0007669"/>
    <property type="project" value="InterPro"/>
</dbReference>
<dbReference type="GO" id="GO:0051287">
    <property type="term" value="F:NAD binding"/>
    <property type="evidence" value="ECO:0007669"/>
    <property type="project" value="InterPro"/>
</dbReference>
<dbReference type="GO" id="GO:0006102">
    <property type="term" value="P:isocitrate metabolic process"/>
    <property type="evidence" value="ECO:0007669"/>
    <property type="project" value="InterPro"/>
</dbReference>
<dbReference type="GO" id="GO:0006099">
    <property type="term" value="P:tricarboxylic acid cycle"/>
    <property type="evidence" value="ECO:0007669"/>
    <property type="project" value="UniProtKB-KW"/>
</dbReference>
<dbReference type="FunFam" id="3.40.718.10:FF:000007">
    <property type="entry name" value="Isocitrate dehydrogenase [NADP]"/>
    <property type="match status" value="1"/>
</dbReference>
<dbReference type="Gene3D" id="3.40.718.10">
    <property type="entry name" value="Isopropylmalate Dehydrogenase"/>
    <property type="match status" value="1"/>
</dbReference>
<dbReference type="InterPro" id="IPR019818">
    <property type="entry name" value="IsoCit/isopropylmalate_DH_CS"/>
</dbReference>
<dbReference type="InterPro" id="IPR004790">
    <property type="entry name" value="Isocitrate_DH_NADP"/>
</dbReference>
<dbReference type="InterPro" id="IPR024084">
    <property type="entry name" value="IsoPropMal-DH-like_dom"/>
</dbReference>
<dbReference type="NCBIfam" id="TIGR00127">
    <property type="entry name" value="nadp_idh_euk"/>
    <property type="match status" value="1"/>
</dbReference>
<dbReference type="NCBIfam" id="NF006156">
    <property type="entry name" value="PRK08299.1"/>
    <property type="match status" value="1"/>
</dbReference>
<dbReference type="PANTHER" id="PTHR11822">
    <property type="entry name" value="NADP-SPECIFIC ISOCITRATE DEHYDROGENASE"/>
    <property type="match status" value="1"/>
</dbReference>
<dbReference type="PANTHER" id="PTHR11822:SF30">
    <property type="entry name" value="PEROXISOMAL ISOCITRATE DEHYDROGENASE [NADP]"/>
    <property type="match status" value="1"/>
</dbReference>
<dbReference type="Pfam" id="PF00180">
    <property type="entry name" value="Iso_dh"/>
    <property type="match status" value="1"/>
</dbReference>
<dbReference type="PIRSF" id="PIRSF000108">
    <property type="entry name" value="IDH_NADP"/>
    <property type="match status" value="1"/>
</dbReference>
<dbReference type="SMART" id="SM01329">
    <property type="entry name" value="Iso_dh"/>
    <property type="match status" value="1"/>
</dbReference>
<dbReference type="SUPFAM" id="SSF53659">
    <property type="entry name" value="Isocitrate/Isopropylmalate dehydrogenase-like"/>
    <property type="match status" value="1"/>
</dbReference>
<dbReference type="PROSITE" id="PS00470">
    <property type="entry name" value="IDH_IMDH"/>
    <property type="match status" value="1"/>
</dbReference>